<feature type="chain" id="PRO_0000188169" description="ATP synthase epsilon chain">
    <location>
        <begin position="1"/>
        <end position="140"/>
    </location>
</feature>
<reference key="1">
    <citation type="journal article" date="2003" name="J. Bacteriol.">
        <title>Complete genome sequence of the ammonia-oxidizing bacterium and obligate chemolithoautotroph Nitrosomonas europaea.</title>
        <authorList>
            <person name="Chain P."/>
            <person name="Lamerdin J.E."/>
            <person name="Larimer F.W."/>
            <person name="Regala W."/>
            <person name="Lao V."/>
            <person name="Land M.L."/>
            <person name="Hauser L."/>
            <person name="Hooper A.B."/>
            <person name="Klotz M.G."/>
            <person name="Norton J."/>
            <person name="Sayavedra-Soto L.A."/>
            <person name="Arciero D.M."/>
            <person name="Hommes N.G."/>
            <person name="Whittaker M.M."/>
            <person name="Arp D.J."/>
        </authorList>
    </citation>
    <scope>NUCLEOTIDE SEQUENCE [LARGE SCALE GENOMIC DNA]</scope>
    <source>
        <strain>ATCC 19718 / CIP 103999 / KCTC 2705 / NBRC 14298</strain>
    </source>
</reference>
<sequence>MGTIFHLDIVSAEESIYSGPAEFIVAPAVMGEVGIFPQHTPMLTRIKSGVVRVKAPLQDDEEVYVSGGMLEVQPDVVTILADTAVRGKDLDEAKALEAKRKAEEIMKNKISEIEYARAQAELIEATAQLAAIQKLRKRGH</sequence>
<dbReference type="EMBL" id="AL954747">
    <property type="protein sequence ID" value="CAD84118.1"/>
    <property type="molecule type" value="Genomic_DNA"/>
</dbReference>
<dbReference type="RefSeq" id="WP_011110852.1">
    <property type="nucleotide sequence ID" value="NC_004757.1"/>
</dbReference>
<dbReference type="SMR" id="Q820S4"/>
<dbReference type="STRING" id="228410.NE0207"/>
<dbReference type="GeneID" id="87103414"/>
<dbReference type="KEGG" id="neu:NE0207"/>
<dbReference type="eggNOG" id="COG0355">
    <property type="taxonomic scope" value="Bacteria"/>
</dbReference>
<dbReference type="HOGENOM" id="CLU_084338_2_0_4"/>
<dbReference type="OrthoDB" id="9791445at2"/>
<dbReference type="PhylomeDB" id="Q820S4"/>
<dbReference type="Proteomes" id="UP000001416">
    <property type="component" value="Chromosome"/>
</dbReference>
<dbReference type="GO" id="GO:0005886">
    <property type="term" value="C:plasma membrane"/>
    <property type="evidence" value="ECO:0007669"/>
    <property type="project" value="UniProtKB-SubCell"/>
</dbReference>
<dbReference type="GO" id="GO:0045259">
    <property type="term" value="C:proton-transporting ATP synthase complex"/>
    <property type="evidence" value="ECO:0007669"/>
    <property type="project" value="UniProtKB-KW"/>
</dbReference>
<dbReference type="GO" id="GO:0005524">
    <property type="term" value="F:ATP binding"/>
    <property type="evidence" value="ECO:0007669"/>
    <property type="project" value="UniProtKB-UniRule"/>
</dbReference>
<dbReference type="GO" id="GO:0046933">
    <property type="term" value="F:proton-transporting ATP synthase activity, rotational mechanism"/>
    <property type="evidence" value="ECO:0007669"/>
    <property type="project" value="UniProtKB-UniRule"/>
</dbReference>
<dbReference type="CDD" id="cd12152">
    <property type="entry name" value="F1-ATPase_delta"/>
    <property type="match status" value="1"/>
</dbReference>
<dbReference type="FunFam" id="2.60.15.10:FF:000001">
    <property type="entry name" value="ATP synthase epsilon chain"/>
    <property type="match status" value="1"/>
</dbReference>
<dbReference type="Gene3D" id="1.20.5.440">
    <property type="entry name" value="ATP synthase delta/epsilon subunit, C-terminal domain"/>
    <property type="match status" value="1"/>
</dbReference>
<dbReference type="Gene3D" id="2.60.15.10">
    <property type="entry name" value="F0F1 ATP synthase delta/epsilon subunit, N-terminal"/>
    <property type="match status" value="1"/>
</dbReference>
<dbReference type="HAMAP" id="MF_00530">
    <property type="entry name" value="ATP_synth_epsil_bac"/>
    <property type="match status" value="1"/>
</dbReference>
<dbReference type="InterPro" id="IPR036794">
    <property type="entry name" value="ATP_F1_dsu/esu_C_sf"/>
</dbReference>
<dbReference type="InterPro" id="IPR001469">
    <property type="entry name" value="ATP_synth_F1_dsu/esu"/>
</dbReference>
<dbReference type="InterPro" id="IPR020546">
    <property type="entry name" value="ATP_synth_F1_dsu/esu_N"/>
</dbReference>
<dbReference type="InterPro" id="IPR020547">
    <property type="entry name" value="ATP_synth_F1_esu_C"/>
</dbReference>
<dbReference type="InterPro" id="IPR036771">
    <property type="entry name" value="ATPsynth_dsu/esu_N"/>
</dbReference>
<dbReference type="NCBIfam" id="TIGR01216">
    <property type="entry name" value="ATP_synt_epsi"/>
    <property type="match status" value="1"/>
</dbReference>
<dbReference type="NCBIfam" id="NF001847">
    <property type="entry name" value="PRK00571.1-4"/>
    <property type="match status" value="1"/>
</dbReference>
<dbReference type="PANTHER" id="PTHR13822">
    <property type="entry name" value="ATP SYNTHASE DELTA/EPSILON CHAIN"/>
    <property type="match status" value="1"/>
</dbReference>
<dbReference type="PANTHER" id="PTHR13822:SF10">
    <property type="entry name" value="ATP SYNTHASE EPSILON CHAIN, CHLOROPLASTIC"/>
    <property type="match status" value="1"/>
</dbReference>
<dbReference type="Pfam" id="PF00401">
    <property type="entry name" value="ATP-synt_DE"/>
    <property type="match status" value="1"/>
</dbReference>
<dbReference type="Pfam" id="PF02823">
    <property type="entry name" value="ATP-synt_DE_N"/>
    <property type="match status" value="1"/>
</dbReference>
<dbReference type="SUPFAM" id="SSF46604">
    <property type="entry name" value="Epsilon subunit of F1F0-ATP synthase C-terminal domain"/>
    <property type="match status" value="1"/>
</dbReference>
<dbReference type="SUPFAM" id="SSF51344">
    <property type="entry name" value="Epsilon subunit of F1F0-ATP synthase N-terminal domain"/>
    <property type="match status" value="1"/>
</dbReference>
<protein>
    <recommendedName>
        <fullName evidence="1">ATP synthase epsilon chain</fullName>
    </recommendedName>
    <alternativeName>
        <fullName evidence="1">ATP synthase F1 sector epsilon subunit</fullName>
    </alternativeName>
    <alternativeName>
        <fullName evidence="1">F-ATPase epsilon subunit</fullName>
    </alternativeName>
</protein>
<organism>
    <name type="scientific">Nitrosomonas europaea (strain ATCC 19718 / CIP 103999 / KCTC 2705 / NBRC 14298)</name>
    <dbReference type="NCBI Taxonomy" id="228410"/>
    <lineage>
        <taxon>Bacteria</taxon>
        <taxon>Pseudomonadati</taxon>
        <taxon>Pseudomonadota</taxon>
        <taxon>Betaproteobacteria</taxon>
        <taxon>Nitrosomonadales</taxon>
        <taxon>Nitrosomonadaceae</taxon>
        <taxon>Nitrosomonas</taxon>
    </lineage>
</organism>
<evidence type="ECO:0000255" key="1">
    <source>
        <dbReference type="HAMAP-Rule" id="MF_00530"/>
    </source>
</evidence>
<keyword id="KW-0066">ATP synthesis</keyword>
<keyword id="KW-0997">Cell inner membrane</keyword>
<keyword id="KW-1003">Cell membrane</keyword>
<keyword id="KW-0139">CF(1)</keyword>
<keyword id="KW-0375">Hydrogen ion transport</keyword>
<keyword id="KW-0406">Ion transport</keyword>
<keyword id="KW-0472">Membrane</keyword>
<keyword id="KW-1185">Reference proteome</keyword>
<keyword id="KW-0813">Transport</keyword>
<name>ATPE_NITEU</name>
<gene>
    <name evidence="1" type="primary">atpC</name>
    <name type="ordered locus">NE0207</name>
</gene>
<proteinExistence type="inferred from homology"/>
<comment type="function">
    <text evidence="1">Produces ATP from ADP in the presence of a proton gradient across the membrane.</text>
</comment>
<comment type="subunit">
    <text>F-type ATPases have 2 components, CF(1) - the catalytic core - and CF(0) - the membrane proton channel. CF(1) has five subunits: alpha(3), beta(3), gamma(1), delta(1), epsilon(1). CF(0) has three main subunits: a, b and c.</text>
</comment>
<comment type="subcellular location">
    <subcellularLocation>
        <location evidence="1">Cell inner membrane</location>
        <topology evidence="1">Peripheral membrane protein</topology>
    </subcellularLocation>
</comment>
<comment type="similarity">
    <text evidence="1">Belongs to the ATPase epsilon chain family.</text>
</comment>
<accession>Q820S4</accession>